<feature type="chain" id="PRO_0000096303" description="Tail tube protein">
    <location>
        <begin position="1"/>
        <end position="301"/>
    </location>
</feature>
<proteinExistence type="evidence at protein level"/>
<name>TUBE_BPF41</name>
<comment type="function">
    <text evidence="1">Forms the cylindrical rigid tail tube.</text>
</comment>
<comment type="subunit">
    <text evidence="1">Homohexamer. The tube is composed of 31 hexameric rings.</text>
</comment>
<comment type="subcellular location">
    <subcellularLocation>
        <location evidence="1">Virion</location>
    </subcellularLocation>
</comment>
<comment type="similarity">
    <text evidence="2">Belongs to the skunalikevirus tail tube protein family.</text>
</comment>
<protein>
    <recommendedName>
        <fullName evidence="1">Tail tube protein</fullName>
        <shortName>TTP</shortName>
    </recommendedName>
    <alternativeName>
        <fullName evidence="1">Major tail protein</fullName>
        <shortName evidence="1">MTP</shortName>
    </alternativeName>
</protein>
<reference key="1">
    <citation type="journal article" date="1991" name="Gene">
        <title>Cloning and nucleotide sequence of the major capsid protein from Lactococcus lactis ssp. cremoris bacteriophage F4-1.</title>
        <authorList>
            <person name="Chung D.K."/>
            <person name="Kim J.H."/>
            <person name="Batt C.A."/>
        </authorList>
    </citation>
    <scope>NUCLEOTIDE SEQUENCE [GENOMIC DNA]</scope>
    <scope>PROTEIN SEQUENCE OF 1-13</scope>
</reference>
<sequence length="301" mass="32389">MKLDYNSREIFFGNEALIVADMSKGINGKPEFTNHKIVAGLVSVGSMEDQAETNSYPADDVPDHGVKKGATLLQGEMVFIQTDQALKEDILGQQRTENGLGWSPTGNWKTKCVQYLIKGRKRDKVTGEFVDGYRVVVYPNLTPTAEATKESETDSVDGVDPIQWTLAVQATESDIYLNGGKKVPAIEYEIWGEQAKDFVKKMESGLFIMQPDTVLAGAITLVAPVIPNVTTATKGNNDGTIVVPDTLKDSKGGTVKVTSVIKDAHGKVATNGQLAPGVYIVTFSADGYEDVTAGVSVTDHS</sequence>
<organism>
    <name type="scientific">Lactococcus phage F4-1</name>
    <name type="common">Lactococcus lactis bacteriophage F4-1</name>
    <dbReference type="NCBI Taxonomy" id="12387"/>
    <lineage>
        <taxon>Viruses</taxon>
        <taxon>Duplodnaviria</taxon>
        <taxon>Heunggongvirae</taxon>
        <taxon>Uroviricota</taxon>
        <taxon>Caudoviricetes</taxon>
        <taxon>Skunavirus</taxon>
    </lineage>
</organism>
<accession>P26596</accession>
<keyword id="KW-0167">Capsid protein</keyword>
<keyword id="KW-0903">Direct protein sequencing</keyword>
<keyword id="KW-1171">Viral genome ejection through host cell envelope</keyword>
<keyword id="KW-1243">Viral long flexible tail ejection system</keyword>
<keyword id="KW-1162">Viral penetration into host cytoplasm</keyword>
<keyword id="KW-1227">Viral tail protein</keyword>
<keyword id="KW-1228">Viral tail tube protein</keyword>
<keyword id="KW-0946">Virion</keyword>
<keyword id="KW-1160">Virus entry into host cell</keyword>
<dbReference type="EMBL" id="M37979">
    <property type="protein sequence ID" value="AAA66055.1"/>
    <property type="molecule type" value="Genomic_DNA"/>
</dbReference>
<dbReference type="PIR" id="JE0412">
    <property type="entry name" value="VHBPLL"/>
</dbReference>
<dbReference type="GO" id="GO:0019028">
    <property type="term" value="C:viral capsid"/>
    <property type="evidence" value="ECO:0007669"/>
    <property type="project" value="UniProtKB-KW"/>
</dbReference>
<dbReference type="GO" id="GO:0098026">
    <property type="term" value="C:virus tail, tube"/>
    <property type="evidence" value="ECO:0007669"/>
    <property type="project" value="UniProtKB-KW"/>
</dbReference>
<dbReference type="GO" id="GO:0099001">
    <property type="term" value="P:symbiont genome ejection through host cell envelope, long flexible tail mechanism"/>
    <property type="evidence" value="ECO:0007669"/>
    <property type="project" value="UniProtKB-KW"/>
</dbReference>
<dbReference type="InterPro" id="IPR010517">
    <property type="entry name" value="L_lac_phage_MSP"/>
</dbReference>
<dbReference type="InterPro" id="IPR046764">
    <property type="entry name" value="L_lac_phage_MSP_N"/>
</dbReference>
<dbReference type="InterPro" id="IPR046763">
    <property type="entry name" value="Phage_tube_C"/>
</dbReference>
<dbReference type="Pfam" id="PF06488">
    <property type="entry name" value="L_lac_phage_MSP"/>
    <property type="match status" value="1"/>
</dbReference>
<dbReference type="Pfam" id="PF20608">
    <property type="entry name" value="Phage_tube_C"/>
    <property type="match status" value="1"/>
</dbReference>
<dbReference type="PIRSF" id="PIRSF004357">
    <property type="entry name" value="L_lac_phage_MSP"/>
    <property type="match status" value="1"/>
</dbReference>
<organismHost>
    <name type="scientific">Lactococcus lactis</name>
    <dbReference type="NCBI Taxonomy" id="1358"/>
</organismHost>
<evidence type="ECO:0000250" key="1">
    <source>
        <dbReference type="UniProtKB" id="Q9MCC1"/>
    </source>
</evidence>
<evidence type="ECO:0000305" key="2"/>